<reference key="1">
    <citation type="journal article" date="1999" name="DNA Res.">
        <title>Complete genome sequence of an aerobic hyper-thermophilic crenarchaeon, Aeropyrum pernix K1.</title>
        <authorList>
            <person name="Kawarabayasi Y."/>
            <person name="Hino Y."/>
            <person name="Horikawa H."/>
            <person name="Yamazaki S."/>
            <person name="Haikawa Y."/>
            <person name="Jin-no K."/>
            <person name="Takahashi M."/>
            <person name="Sekine M."/>
            <person name="Baba S."/>
            <person name="Ankai A."/>
            <person name="Kosugi H."/>
            <person name="Hosoyama A."/>
            <person name="Fukui S."/>
            <person name="Nagai Y."/>
            <person name="Nishijima K."/>
            <person name="Nakazawa H."/>
            <person name="Takamiya M."/>
            <person name="Masuda S."/>
            <person name="Funahashi T."/>
            <person name="Tanaka T."/>
            <person name="Kudoh Y."/>
            <person name="Yamazaki J."/>
            <person name="Kushida N."/>
            <person name="Oguchi A."/>
            <person name="Aoki K."/>
            <person name="Kubota K."/>
            <person name="Nakamura Y."/>
            <person name="Nomura N."/>
            <person name="Sako Y."/>
            <person name="Kikuchi H."/>
        </authorList>
    </citation>
    <scope>NUCLEOTIDE SEQUENCE [LARGE SCALE GENOMIC DNA]</scope>
    <source>
        <strain>ATCC 700893 / DSM 11879 / JCM 9820 / NBRC 100138 / K1</strain>
    </source>
</reference>
<gene>
    <name type="primary">hisS</name>
    <name type="ordered locus">APE_0662.1</name>
</gene>
<comment type="catalytic activity">
    <reaction>
        <text>tRNA(His) + L-histidine + ATP = L-histidyl-tRNA(His) + AMP + diphosphate + H(+)</text>
        <dbReference type="Rhea" id="RHEA:17313"/>
        <dbReference type="Rhea" id="RHEA-COMP:9665"/>
        <dbReference type="Rhea" id="RHEA-COMP:9689"/>
        <dbReference type="ChEBI" id="CHEBI:15378"/>
        <dbReference type="ChEBI" id="CHEBI:30616"/>
        <dbReference type="ChEBI" id="CHEBI:33019"/>
        <dbReference type="ChEBI" id="CHEBI:57595"/>
        <dbReference type="ChEBI" id="CHEBI:78442"/>
        <dbReference type="ChEBI" id="CHEBI:78527"/>
        <dbReference type="ChEBI" id="CHEBI:456215"/>
        <dbReference type="EC" id="6.1.1.21"/>
    </reaction>
</comment>
<comment type="subcellular location">
    <subcellularLocation>
        <location evidence="1">Cytoplasm</location>
    </subcellularLocation>
</comment>
<comment type="similarity">
    <text evidence="2">Belongs to the class-II aminoacyl-tRNA synthetase family.</text>
</comment>
<name>SYH_AERPE</name>
<dbReference type="EC" id="6.1.1.21"/>
<dbReference type="EMBL" id="BA000002">
    <property type="protein sequence ID" value="BAA79634.2"/>
    <property type="molecule type" value="Genomic_DNA"/>
</dbReference>
<dbReference type="PIR" id="B72654">
    <property type="entry name" value="B72654"/>
</dbReference>
<dbReference type="RefSeq" id="WP_010865887.1">
    <property type="nucleotide sequence ID" value="NC_000854.2"/>
</dbReference>
<dbReference type="SMR" id="Q9YEB2"/>
<dbReference type="STRING" id="272557.APE_0662.1"/>
<dbReference type="EnsemblBacteria" id="BAA79634">
    <property type="protein sequence ID" value="BAA79634"/>
    <property type="gene ID" value="APE_0662.1"/>
</dbReference>
<dbReference type="GeneID" id="1444798"/>
<dbReference type="KEGG" id="ape:APE_0662.1"/>
<dbReference type="PATRIC" id="fig|272557.25.peg.475"/>
<dbReference type="eggNOG" id="arCOG00404">
    <property type="taxonomic scope" value="Archaea"/>
</dbReference>
<dbReference type="BRENDA" id="6.1.1.21">
    <property type="organism ID" value="171"/>
</dbReference>
<dbReference type="Proteomes" id="UP000002518">
    <property type="component" value="Chromosome"/>
</dbReference>
<dbReference type="GO" id="GO:0005829">
    <property type="term" value="C:cytosol"/>
    <property type="evidence" value="ECO:0007669"/>
    <property type="project" value="TreeGrafter"/>
</dbReference>
<dbReference type="GO" id="GO:0005524">
    <property type="term" value="F:ATP binding"/>
    <property type="evidence" value="ECO:0007669"/>
    <property type="project" value="UniProtKB-UniRule"/>
</dbReference>
<dbReference type="GO" id="GO:0004821">
    <property type="term" value="F:histidine-tRNA ligase activity"/>
    <property type="evidence" value="ECO:0007669"/>
    <property type="project" value="UniProtKB-UniRule"/>
</dbReference>
<dbReference type="GO" id="GO:0003723">
    <property type="term" value="F:RNA binding"/>
    <property type="evidence" value="ECO:0007669"/>
    <property type="project" value="TreeGrafter"/>
</dbReference>
<dbReference type="GO" id="GO:0006427">
    <property type="term" value="P:histidyl-tRNA aminoacylation"/>
    <property type="evidence" value="ECO:0007669"/>
    <property type="project" value="UniProtKB-UniRule"/>
</dbReference>
<dbReference type="CDD" id="cd00773">
    <property type="entry name" value="HisRS-like_core"/>
    <property type="match status" value="1"/>
</dbReference>
<dbReference type="Gene3D" id="3.40.50.800">
    <property type="entry name" value="Anticodon-binding domain"/>
    <property type="match status" value="1"/>
</dbReference>
<dbReference type="Gene3D" id="3.30.930.10">
    <property type="entry name" value="Bira Bifunctional Protein, Domain 2"/>
    <property type="match status" value="1"/>
</dbReference>
<dbReference type="HAMAP" id="MF_00127">
    <property type="entry name" value="His_tRNA_synth"/>
    <property type="match status" value="1"/>
</dbReference>
<dbReference type="InterPro" id="IPR006195">
    <property type="entry name" value="aa-tRNA-synth_II"/>
</dbReference>
<dbReference type="InterPro" id="IPR045864">
    <property type="entry name" value="aa-tRNA-synth_II/BPL/LPL"/>
</dbReference>
<dbReference type="InterPro" id="IPR004154">
    <property type="entry name" value="Anticodon-bd"/>
</dbReference>
<dbReference type="InterPro" id="IPR036621">
    <property type="entry name" value="Anticodon-bd_dom_sf"/>
</dbReference>
<dbReference type="InterPro" id="IPR015807">
    <property type="entry name" value="His-tRNA-ligase"/>
</dbReference>
<dbReference type="InterPro" id="IPR041715">
    <property type="entry name" value="HisRS-like_core"/>
</dbReference>
<dbReference type="InterPro" id="IPR004516">
    <property type="entry name" value="HisRS/HisZ"/>
</dbReference>
<dbReference type="NCBIfam" id="TIGR00442">
    <property type="entry name" value="hisS"/>
    <property type="match status" value="1"/>
</dbReference>
<dbReference type="PANTHER" id="PTHR11476:SF7">
    <property type="entry name" value="HISTIDINE--TRNA LIGASE"/>
    <property type="match status" value="1"/>
</dbReference>
<dbReference type="PANTHER" id="PTHR11476">
    <property type="entry name" value="HISTIDYL-TRNA SYNTHETASE"/>
    <property type="match status" value="1"/>
</dbReference>
<dbReference type="Pfam" id="PF03129">
    <property type="entry name" value="HGTP_anticodon"/>
    <property type="match status" value="1"/>
</dbReference>
<dbReference type="Pfam" id="PF13393">
    <property type="entry name" value="tRNA-synt_His"/>
    <property type="match status" value="1"/>
</dbReference>
<dbReference type="PIRSF" id="PIRSF001549">
    <property type="entry name" value="His-tRNA_synth"/>
    <property type="match status" value="1"/>
</dbReference>
<dbReference type="SUPFAM" id="SSF52954">
    <property type="entry name" value="Class II aaRS ABD-related"/>
    <property type="match status" value="1"/>
</dbReference>
<dbReference type="SUPFAM" id="SSF55681">
    <property type="entry name" value="Class II aaRS and biotin synthetases"/>
    <property type="match status" value="1"/>
</dbReference>
<dbReference type="PROSITE" id="PS50862">
    <property type="entry name" value="AA_TRNA_LIGASE_II"/>
    <property type="match status" value="1"/>
</dbReference>
<feature type="chain" id="PRO_0000136307" description="Histidine--tRNA ligase">
    <location>
        <begin position="1"/>
        <end position="435"/>
    </location>
</feature>
<protein>
    <recommendedName>
        <fullName>Histidine--tRNA ligase</fullName>
        <ecNumber>6.1.1.21</ecNumber>
    </recommendedName>
    <alternativeName>
        <fullName>Histidyl-tRNA synthetase</fullName>
        <shortName>HisRS</shortName>
    </alternativeName>
</protein>
<accession>Q9YEB2</accession>
<keyword id="KW-0030">Aminoacyl-tRNA synthetase</keyword>
<keyword id="KW-0067">ATP-binding</keyword>
<keyword id="KW-0963">Cytoplasm</keyword>
<keyword id="KW-0436">Ligase</keyword>
<keyword id="KW-0547">Nucleotide-binding</keyword>
<keyword id="KW-0648">Protein biosynthesis</keyword>
<keyword id="KW-1185">Reference proteome</keyword>
<sequence>MAGGRPRPPRGFRDFPPEVMILRKRLLSRLERVFESYGFDPLDTPAVEYWETLSGKYGEEAESRLIWRFQDPWSGRWYALRYDLTVPLARFVASNPGLPMPFKRYHIGKVWRHEEPQKGRYREFVQCDADIVGSPYPEADAEIVSLAVDSIDALGLPGFRVRVNDRRLLAGVFEEELGFDNPLPIYRAIDKLDKIGVEGVRRELERLGLPGSTVERIMEIISWRGRPGEVLESVRRGYGSNEKVREALDHLEEMLSLADDKRVELDMSLVRGLDYYTGPILEVVLDEPRIGSVAGGGRYDGLVGMFAGRDIPATGVSIGIERIIDAGLELGVYSLDVKTVAQVAVVVLDRRYYRYAWEAARILRRGGLNVRIDLSRASGQVQRRKASRLGIPVLAFVGAKEAEGGFLTLYSAAKGERVAVPLGEAVKAVERLLPS</sequence>
<organism>
    <name type="scientific">Aeropyrum pernix (strain ATCC 700893 / DSM 11879 / JCM 9820 / NBRC 100138 / K1)</name>
    <dbReference type="NCBI Taxonomy" id="272557"/>
    <lineage>
        <taxon>Archaea</taxon>
        <taxon>Thermoproteota</taxon>
        <taxon>Thermoprotei</taxon>
        <taxon>Desulfurococcales</taxon>
        <taxon>Desulfurococcaceae</taxon>
        <taxon>Aeropyrum</taxon>
    </lineage>
</organism>
<proteinExistence type="inferred from homology"/>
<evidence type="ECO:0000250" key="1"/>
<evidence type="ECO:0000305" key="2"/>